<reference key="1">
    <citation type="journal article" date="2004" name="Proc. Natl. Acad. Sci. U.S.A.">
        <title>The complete genomic sequence of Nocardia farcinica IFM 10152.</title>
        <authorList>
            <person name="Ishikawa J."/>
            <person name="Yamashita A."/>
            <person name="Mikami Y."/>
            <person name="Hoshino Y."/>
            <person name="Kurita H."/>
            <person name="Hotta K."/>
            <person name="Shiba T."/>
            <person name="Hattori M."/>
        </authorList>
    </citation>
    <scope>NUCLEOTIDE SEQUENCE [LARGE SCALE GENOMIC DNA]</scope>
    <source>
        <strain>IFM 10152</strain>
    </source>
</reference>
<organism>
    <name type="scientific">Nocardia farcinica (strain IFM 10152)</name>
    <dbReference type="NCBI Taxonomy" id="247156"/>
    <lineage>
        <taxon>Bacteria</taxon>
        <taxon>Bacillati</taxon>
        <taxon>Actinomycetota</taxon>
        <taxon>Actinomycetes</taxon>
        <taxon>Mycobacteriales</taxon>
        <taxon>Nocardiaceae</taxon>
        <taxon>Nocardia</taxon>
    </lineage>
</organism>
<protein>
    <recommendedName>
        <fullName evidence="1">5-oxoprolinase subunit A</fullName>
        <shortName evidence="1">5-OPase subunit A</shortName>
        <ecNumber evidence="1">3.5.2.9</ecNumber>
    </recommendedName>
    <alternativeName>
        <fullName evidence="1">5-oxoprolinase (ATP-hydrolyzing) subunit A</fullName>
    </alternativeName>
</protein>
<gene>
    <name evidence="1" type="primary">pxpA</name>
    <name type="ordered locus">NFA_56540</name>
</gene>
<sequence length="250" mass="25807">MPLDLNSDLGEGFGSWTMGDDAAMLDLVTSANIACGFHAGDPSIMRRTCALAAERGVRIGAHVGHRDLVGFGRRRIEIDPADLRDEVLYQIGALDGFARAAGSRVSYVKPHGALYHSAAARRDLADAVLAAMTDLDPKLVLLGPAGTELEHAATAAGVRFIGEGFADRAYTPEGRLAPRGRAGAVLDADAAVAQAVAIATEGRARVVEGGTVEVGAGSVCVHGDTPAAVEMARRIRDALAAAGVVVEAFV</sequence>
<feature type="chain" id="PRO_0000185021" description="5-oxoprolinase subunit A">
    <location>
        <begin position="1"/>
        <end position="250"/>
    </location>
</feature>
<name>PXPA_NOCFA</name>
<keyword id="KW-0067">ATP-binding</keyword>
<keyword id="KW-0378">Hydrolase</keyword>
<keyword id="KW-0547">Nucleotide-binding</keyword>
<keyword id="KW-1185">Reference proteome</keyword>
<comment type="function">
    <text evidence="1">Catalyzes the cleavage of 5-oxoproline to form L-glutamate coupled to the hydrolysis of ATP to ADP and inorganic phosphate.</text>
</comment>
<comment type="catalytic activity">
    <reaction evidence="1">
        <text>5-oxo-L-proline + ATP + 2 H2O = L-glutamate + ADP + phosphate + H(+)</text>
        <dbReference type="Rhea" id="RHEA:10348"/>
        <dbReference type="ChEBI" id="CHEBI:15377"/>
        <dbReference type="ChEBI" id="CHEBI:15378"/>
        <dbReference type="ChEBI" id="CHEBI:29985"/>
        <dbReference type="ChEBI" id="CHEBI:30616"/>
        <dbReference type="ChEBI" id="CHEBI:43474"/>
        <dbReference type="ChEBI" id="CHEBI:58402"/>
        <dbReference type="ChEBI" id="CHEBI:456216"/>
        <dbReference type="EC" id="3.5.2.9"/>
    </reaction>
</comment>
<comment type="subunit">
    <text evidence="1">Forms a complex composed of PxpA, PxpB and PxpC.</text>
</comment>
<comment type="similarity">
    <text evidence="1">Belongs to the LamB/PxpA family.</text>
</comment>
<dbReference type="EC" id="3.5.2.9" evidence="1"/>
<dbReference type="EMBL" id="AP006618">
    <property type="protein sequence ID" value="BAD60506.1"/>
    <property type="molecule type" value="Genomic_DNA"/>
</dbReference>
<dbReference type="RefSeq" id="WP_011212188.1">
    <property type="nucleotide sequence ID" value="NC_006361.1"/>
</dbReference>
<dbReference type="SMR" id="Q5YMT5"/>
<dbReference type="STRING" id="247156.NFA_56540"/>
<dbReference type="GeneID" id="61136217"/>
<dbReference type="KEGG" id="nfa:NFA_56540"/>
<dbReference type="eggNOG" id="COG1540">
    <property type="taxonomic scope" value="Bacteria"/>
</dbReference>
<dbReference type="HOGENOM" id="CLU_069535_0_0_11"/>
<dbReference type="OrthoDB" id="9773478at2"/>
<dbReference type="Proteomes" id="UP000006820">
    <property type="component" value="Chromosome"/>
</dbReference>
<dbReference type="GO" id="GO:0017168">
    <property type="term" value="F:5-oxoprolinase (ATP-hydrolyzing) activity"/>
    <property type="evidence" value="ECO:0007669"/>
    <property type="project" value="UniProtKB-UniRule"/>
</dbReference>
<dbReference type="GO" id="GO:0005524">
    <property type="term" value="F:ATP binding"/>
    <property type="evidence" value="ECO:0007669"/>
    <property type="project" value="UniProtKB-UniRule"/>
</dbReference>
<dbReference type="GO" id="GO:0005975">
    <property type="term" value="P:carbohydrate metabolic process"/>
    <property type="evidence" value="ECO:0007669"/>
    <property type="project" value="InterPro"/>
</dbReference>
<dbReference type="CDD" id="cd10787">
    <property type="entry name" value="LamB_YcsF_like"/>
    <property type="match status" value="1"/>
</dbReference>
<dbReference type="Gene3D" id="3.20.20.370">
    <property type="entry name" value="Glycoside hydrolase/deacetylase"/>
    <property type="match status" value="1"/>
</dbReference>
<dbReference type="HAMAP" id="MF_00691">
    <property type="entry name" value="PxpA"/>
    <property type="match status" value="1"/>
</dbReference>
<dbReference type="InterPro" id="IPR011330">
    <property type="entry name" value="Glyco_hydro/deAcase_b/a-brl"/>
</dbReference>
<dbReference type="InterPro" id="IPR005501">
    <property type="entry name" value="LamB/YcsF/PxpA-like"/>
</dbReference>
<dbReference type="NCBIfam" id="NF003814">
    <property type="entry name" value="PRK05406.1-3"/>
    <property type="match status" value="1"/>
</dbReference>
<dbReference type="NCBIfam" id="NF003816">
    <property type="entry name" value="PRK05406.1-5"/>
    <property type="match status" value="1"/>
</dbReference>
<dbReference type="PANTHER" id="PTHR30292:SF0">
    <property type="entry name" value="5-OXOPROLINASE SUBUNIT A"/>
    <property type="match status" value="1"/>
</dbReference>
<dbReference type="PANTHER" id="PTHR30292">
    <property type="entry name" value="UNCHARACTERIZED PROTEIN YBGL-RELATED"/>
    <property type="match status" value="1"/>
</dbReference>
<dbReference type="Pfam" id="PF03746">
    <property type="entry name" value="LamB_YcsF"/>
    <property type="match status" value="1"/>
</dbReference>
<dbReference type="SUPFAM" id="SSF88713">
    <property type="entry name" value="Glycoside hydrolase/deacetylase"/>
    <property type="match status" value="1"/>
</dbReference>
<proteinExistence type="inferred from homology"/>
<accession>Q5YMT5</accession>
<evidence type="ECO:0000255" key="1">
    <source>
        <dbReference type="HAMAP-Rule" id="MF_00691"/>
    </source>
</evidence>